<comment type="function">
    <text evidence="1">Catalyzes the reversible formation of acyl-phosphate (acyl-PO(4)) from acyl-[acyl-carrier-protein] (acyl-ACP). This enzyme utilizes acyl-ACP as fatty acyl donor, but not acyl-CoA.</text>
</comment>
<comment type="catalytic activity">
    <reaction evidence="1">
        <text>a fatty acyl-[ACP] + phosphate = an acyl phosphate + holo-[ACP]</text>
        <dbReference type="Rhea" id="RHEA:42292"/>
        <dbReference type="Rhea" id="RHEA-COMP:9685"/>
        <dbReference type="Rhea" id="RHEA-COMP:14125"/>
        <dbReference type="ChEBI" id="CHEBI:43474"/>
        <dbReference type="ChEBI" id="CHEBI:59918"/>
        <dbReference type="ChEBI" id="CHEBI:64479"/>
        <dbReference type="ChEBI" id="CHEBI:138651"/>
        <dbReference type="EC" id="2.3.1.274"/>
    </reaction>
</comment>
<comment type="pathway">
    <text evidence="1">Lipid metabolism; phospholipid metabolism.</text>
</comment>
<comment type="subunit">
    <text evidence="1">Homodimer. Probably interacts with PlsY.</text>
</comment>
<comment type="subcellular location">
    <subcellularLocation>
        <location evidence="1">Cytoplasm</location>
    </subcellularLocation>
    <text evidence="1">Associated with the membrane possibly through PlsY.</text>
</comment>
<comment type="similarity">
    <text evidence="1">Belongs to the PlsX family.</text>
</comment>
<feature type="chain" id="PRO_1000001822" description="Phosphate acyltransferase">
    <location>
        <begin position="1"/>
        <end position="359"/>
    </location>
</feature>
<protein>
    <recommendedName>
        <fullName evidence="1">Phosphate acyltransferase</fullName>
        <ecNumber evidence="1">2.3.1.274</ecNumber>
    </recommendedName>
    <alternativeName>
        <fullName evidence="1">Acyl-ACP phosphotransacylase</fullName>
    </alternativeName>
    <alternativeName>
        <fullName evidence="1">Acyl-[acyl-carrier-protein]--phosphate acyltransferase</fullName>
    </alternativeName>
    <alternativeName>
        <fullName evidence="1">Phosphate-acyl-ACP acyltransferase</fullName>
    </alternativeName>
</protein>
<evidence type="ECO:0000255" key="1">
    <source>
        <dbReference type="HAMAP-Rule" id="MF_00019"/>
    </source>
</evidence>
<proteinExistence type="inferred from homology"/>
<reference key="1">
    <citation type="journal article" date="2004" name="Nat. Genet.">
        <title>Comparison of genome degradation in Paratyphi A and Typhi, human-restricted serovars of Salmonella enterica that cause typhoid.</title>
        <authorList>
            <person name="McClelland M."/>
            <person name="Sanderson K.E."/>
            <person name="Clifton S.W."/>
            <person name="Latreille P."/>
            <person name="Porwollik S."/>
            <person name="Sabo A."/>
            <person name="Meyer R."/>
            <person name="Bieri T."/>
            <person name="Ozersky P."/>
            <person name="McLellan M."/>
            <person name="Harkins C.R."/>
            <person name="Wang C."/>
            <person name="Nguyen C."/>
            <person name="Berghoff A."/>
            <person name="Elliott G."/>
            <person name="Kohlberg S."/>
            <person name="Strong C."/>
            <person name="Du F."/>
            <person name="Carter J."/>
            <person name="Kremizki C."/>
            <person name="Layman D."/>
            <person name="Leonard S."/>
            <person name="Sun H."/>
            <person name="Fulton L."/>
            <person name="Nash W."/>
            <person name="Miner T."/>
            <person name="Minx P."/>
            <person name="Delehaunty K."/>
            <person name="Fronick C."/>
            <person name="Magrini V."/>
            <person name="Nhan M."/>
            <person name="Warren W."/>
            <person name="Florea L."/>
            <person name="Spieth J."/>
            <person name="Wilson R.K."/>
        </authorList>
    </citation>
    <scope>NUCLEOTIDE SEQUENCE [LARGE SCALE GENOMIC DNA]</scope>
    <source>
        <strain>ATCC 9150 / SARB42</strain>
    </source>
</reference>
<sequence length="359" mass="38716">MTRLTLALDVMGGDFGPSVTVPAALQALNANSQLTLLLVGNPDIITPLLAKADFEQRSRLQIIPAQSVIASDARPSQAIRASRGTSMRVALELVKEGRAEACVSAGNTGALMGLAKLLLKPLEGIERPALVTVLPHQQKGKTVVLDLGANVDCDSTMLVQFAVMGAVLAEEVVGIKNPRVALLNIGEEETKGLDSIREASLMLKTVPTINYIGYLEANELLTGKTDVLVCDGFTGNVTLKTMEGVVRMFLSLLKSQGEGKKRSWWLLLLKRWLQKSLTRRFSHLNPDQYNGACLLGLRGTVIKSHGAANQRAFAVAIEQAVQAVQRQVPQRIAARLESVYPAGFEPLDDGKGVNLRAHR</sequence>
<dbReference type="EC" id="2.3.1.274" evidence="1"/>
<dbReference type="EMBL" id="CP000026">
    <property type="protein sequence ID" value="AAV77585.1"/>
    <property type="molecule type" value="Genomic_DNA"/>
</dbReference>
<dbReference type="RefSeq" id="WP_001518286.1">
    <property type="nucleotide sequence ID" value="NC_006511.1"/>
</dbReference>
<dbReference type="SMR" id="Q5PGU0"/>
<dbReference type="KEGG" id="spt:SPA1659"/>
<dbReference type="HOGENOM" id="CLU_039379_1_0_6"/>
<dbReference type="UniPathway" id="UPA00085"/>
<dbReference type="Proteomes" id="UP000008185">
    <property type="component" value="Chromosome"/>
</dbReference>
<dbReference type="GO" id="GO:0005737">
    <property type="term" value="C:cytoplasm"/>
    <property type="evidence" value="ECO:0007669"/>
    <property type="project" value="UniProtKB-SubCell"/>
</dbReference>
<dbReference type="GO" id="GO:0043811">
    <property type="term" value="F:phosphate:acyl-[acyl carrier protein] acyltransferase activity"/>
    <property type="evidence" value="ECO:0007669"/>
    <property type="project" value="UniProtKB-UniRule"/>
</dbReference>
<dbReference type="GO" id="GO:0006633">
    <property type="term" value="P:fatty acid biosynthetic process"/>
    <property type="evidence" value="ECO:0007669"/>
    <property type="project" value="UniProtKB-UniRule"/>
</dbReference>
<dbReference type="GO" id="GO:0008654">
    <property type="term" value="P:phospholipid biosynthetic process"/>
    <property type="evidence" value="ECO:0007669"/>
    <property type="project" value="UniProtKB-KW"/>
</dbReference>
<dbReference type="FunFam" id="3.40.718.10:FF:000008">
    <property type="entry name" value="Phosphate acyltransferase"/>
    <property type="match status" value="1"/>
</dbReference>
<dbReference type="Gene3D" id="3.40.718.10">
    <property type="entry name" value="Isopropylmalate Dehydrogenase"/>
    <property type="match status" value="1"/>
</dbReference>
<dbReference type="HAMAP" id="MF_00019">
    <property type="entry name" value="PlsX"/>
    <property type="match status" value="1"/>
</dbReference>
<dbReference type="InterPro" id="IPR003664">
    <property type="entry name" value="FA_synthesis"/>
</dbReference>
<dbReference type="InterPro" id="IPR012281">
    <property type="entry name" value="Phospholipid_synth_PlsX-like"/>
</dbReference>
<dbReference type="NCBIfam" id="TIGR00182">
    <property type="entry name" value="plsX"/>
    <property type="match status" value="1"/>
</dbReference>
<dbReference type="PANTHER" id="PTHR30100">
    <property type="entry name" value="FATTY ACID/PHOSPHOLIPID SYNTHESIS PROTEIN PLSX"/>
    <property type="match status" value="1"/>
</dbReference>
<dbReference type="PANTHER" id="PTHR30100:SF1">
    <property type="entry name" value="PHOSPHATE ACYLTRANSFERASE"/>
    <property type="match status" value="1"/>
</dbReference>
<dbReference type="Pfam" id="PF02504">
    <property type="entry name" value="FA_synthesis"/>
    <property type="match status" value="1"/>
</dbReference>
<dbReference type="PIRSF" id="PIRSF002465">
    <property type="entry name" value="Phsphlp_syn_PlsX"/>
    <property type="match status" value="1"/>
</dbReference>
<dbReference type="SUPFAM" id="SSF53659">
    <property type="entry name" value="Isocitrate/Isopropylmalate dehydrogenase-like"/>
    <property type="match status" value="1"/>
</dbReference>
<organism>
    <name type="scientific">Salmonella paratyphi A (strain ATCC 9150 / SARB42)</name>
    <dbReference type="NCBI Taxonomy" id="295319"/>
    <lineage>
        <taxon>Bacteria</taxon>
        <taxon>Pseudomonadati</taxon>
        <taxon>Pseudomonadota</taxon>
        <taxon>Gammaproteobacteria</taxon>
        <taxon>Enterobacterales</taxon>
        <taxon>Enterobacteriaceae</taxon>
        <taxon>Salmonella</taxon>
    </lineage>
</organism>
<name>PLSX_SALPA</name>
<gene>
    <name evidence="1" type="primary">plsX</name>
    <name type="ordered locus">SPA1659</name>
</gene>
<keyword id="KW-0963">Cytoplasm</keyword>
<keyword id="KW-0444">Lipid biosynthesis</keyword>
<keyword id="KW-0443">Lipid metabolism</keyword>
<keyword id="KW-0594">Phospholipid biosynthesis</keyword>
<keyword id="KW-1208">Phospholipid metabolism</keyword>
<keyword id="KW-0808">Transferase</keyword>
<accession>Q5PGU0</accession>